<comment type="similarity">
    <text evidence="1">Belongs to the UPF0250 family.</text>
</comment>
<gene>
    <name evidence="1" type="primary">ybeD</name>
    <name type="ordered locus">ECH74115_0719</name>
</gene>
<name>YBED_ECO5E</name>
<sequence>MKTKLNELLEFPTPFTYKVMGQALPELVDQVVEVVQRHAPGDYTPTVKPSSKGNYHSVSITINATHIEQVETLYEELGKIDIVRMVL</sequence>
<accession>B5YQI2</accession>
<reference key="1">
    <citation type="journal article" date="2011" name="Proc. Natl. Acad. Sci. U.S.A.">
        <title>Genomic anatomy of Escherichia coli O157:H7 outbreaks.</title>
        <authorList>
            <person name="Eppinger M."/>
            <person name="Mammel M.K."/>
            <person name="Leclerc J.E."/>
            <person name="Ravel J."/>
            <person name="Cebula T.A."/>
        </authorList>
    </citation>
    <scope>NUCLEOTIDE SEQUENCE [LARGE SCALE GENOMIC DNA]</scope>
    <source>
        <strain>EC4115 / EHEC</strain>
    </source>
</reference>
<organism>
    <name type="scientific">Escherichia coli O157:H7 (strain EC4115 / EHEC)</name>
    <dbReference type="NCBI Taxonomy" id="444450"/>
    <lineage>
        <taxon>Bacteria</taxon>
        <taxon>Pseudomonadati</taxon>
        <taxon>Pseudomonadota</taxon>
        <taxon>Gammaproteobacteria</taxon>
        <taxon>Enterobacterales</taxon>
        <taxon>Enterobacteriaceae</taxon>
        <taxon>Escherichia</taxon>
    </lineage>
</organism>
<feature type="chain" id="PRO_1000131240" description="UPF0250 protein YbeD">
    <location>
        <begin position="1"/>
        <end position="87"/>
    </location>
</feature>
<evidence type="ECO:0000255" key="1">
    <source>
        <dbReference type="HAMAP-Rule" id="MF_00659"/>
    </source>
</evidence>
<dbReference type="EMBL" id="CP001164">
    <property type="protein sequence ID" value="ACI37182.1"/>
    <property type="molecule type" value="Genomic_DNA"/>
</dbReference>
<dbReference type="RefSeq" id="WP_000850550.1">
    <property type="nucleotide sequence ID" value="NC_011353.1"/>
</dbReference>
<dbReference type="SMR" id="B5YQI2"/>
<dbReference type="GeneID" id="93776851"/>
<dbReference type="KEGG" id="ecf:ECH74115_0719"/>
<dbReference type="HOGENOM" id="CLU_161438_2_1_6"/>
<dbReference type="GO" id="GO:0005829">
    <property type="term" value="C:cytosol"/>
    <property type="evidence" value="ECO:0007669"/>
    <property type="project" value="TreeGrafter"/>
</dbReference>
<dbReference type="FunFam" id="3.30.70.260:FF:000002">
    <property type="entry name" value="UPF0250 protein YbeD"/>
    <property type="match status" value="1"/>
</dbReference>
<dbReference type="Gene3D" id="3.30.70.260">
    <property type="match status" value="1"/>
</dbReference>
<dbReference type="HAMAP" id="MF_00659">
    <property type="entry name" value="UPF0250"/>
    <property type="match status" value="1"/>
</dbReference>
<dbReference type="InterPro" id="IPR007454">
    <property type="entry name" value="UPF0250_YbeD-like"/>
</dbReference>
<dbReference type="InterPro" id="IPR027471">
    <property type="entry name" value="YbeD-like_sf"/>
</dbReference>
<dbReference type="NCBIfam" id="NF003447">
    <property type="entry name" value="PRK04998.1"/>
    <property type="match status" value="1"/>
</dbReference>
<dbReference type="PANTHER" id="PTHR38036">
    <property type="entry name" value="UPF0250 PROTEIN YBED"/>
    <property type="match status" value="1"/>
</dbReference>
<dbReference type="PANTHER" id="PTHR38036:SF1">
    <property type="entry name" value="UPF0250 PROTEIN YBED"/>
    <property type="match status" value="1"/>
</dbReference>
<dbReference type="Pfam" id="PF04359">
    <property type="entry name" value="DUF493"/>
    <property type="match status" value="1"/>
</dbReference>
<dbReference type="SUPFAM" id="SSF117991">
    <property type="entry name" value="YbeD/HP0495-like"/>
    <property type="match status" value="1"/>
</dbReference>
<proteinExistence type="inferred from homology"/>
<protein>
    <recommendedName>
        <fullName evidence="1">UPF0250 protein YbeD</fullName>
    </recommendedName>
</protein>